<evidence type="ECO:0000250" key="1">
    <source>
        <dbReference type="UniProtKB" id="Q924S7"/>
    </source>
</evidence>
<evidence type="ECO:0000255" key="2">
    <source>
        <dbReference type="PROSITE-ProRule" id="PRU00410"/>
    </source>
</evidence>
<evidence type="ECO:0000255" key="3">
    <source>
        <dbReference type="PROSITE-ProRule" id="PRU00572"/>
    </source>
</evidence>
<evidence type="ECO:0000255" key="4">
    <source>
        <dbReference type="PROSITE-ProRule" id="PRU00821"/>
    </source>
</evidence>
<evidence type="ECO:0000256" key="5">
    <source>
        <dbReference type="SAM" id="MobiDB-lite"/>
    </source>
</evidence>
<evidence type="ECO:0000269" key="6">
    <source>
    </source>
</evidence>
<evidence type="ECO:0000269" key="7">
    <source>
    </source>
</evidence>
<evidence type="ECO:0000269" key="8">
    <source>
    </source>
</evidence>
<evidence type="ECO:0000269" key="9">
    <source>
    </source>
</evidence>
<evidence type="ECO:0000303" key="10">
    <source>
    </source>
</evidence>
<evidence type="ECO:0000305" key="11"/>
<evidence type="ECO:0000305" key="12">
    <source>
    </source>
</evidence>
<evidence type="ECO:0007744" key="13">
    <source>
    </source>
</evidence>
<evidence type="ECO:0007829" key="14">
    <source>
        <dbReference type="PDB" id="2JP2"/>
    </source>
</evidence>
<reference key="1">
    <citation type="journal article" date="2005" name="Biochem. J.">
        <title>Distinct requirements for the Sprouty domain for functional activity of Spred proteins.</title>
        <authorList>
            <person name="King J.A.J."/>
            <person name="Straffon A.F.L."/>
            <person name="D'Abaco G.M."/>
            <person name="Poon C.L.C."/>
            <person name="I S.T.T."/>
            <person name="Smith C.M."/>
            <person name="Buchert M."/>
            <person name="Corcoran N.M."/>
            <person name="Hall N.E."/>
            <person name="Callus B.A."/>
            <person name="Sarcevic B."/>
            <person name="Martin D."/>
            <person name="Lock P."/>
            <person name="Hovens C.M."/>
        </authorList>
    </citation>
    <scope>NUCLEOTIDE SEQUENCE [MRNA] (ISOFORM 1)</scope>
    <scope>FUNCTION</scope>
    <scope>SUBUNIT</scope>
    <scope>INTERACTION WITH SPRED1</scope>
    <scope>PHOSPHORYLATION</scope>
    <source>
        <tissue>Glioblastoma</tissue>
    </source>
</reference>
<reference key="2">
    <citation type="journal article" date="2004" name="Nat. Genet.">
        <title>Complete sequencing and characterization of 21,243 full-length human cDNAs.</title>
        <authorList>
            <person name="Ota T."/>
            <person name="Suzuki Y."/>
            <person name="Nishikawa T."/>
            <person name="Otsuki T."/>
            <person name="Sugiyama T."/>
            <person name="Irie R."/>
            <person name="Wakamatsu A."/>
            <person name="Hayashi K."/>
            <person name="Sato H."/>
            <person name="Nagai K."/>
            <person name="Kimura K."/>
            <person name="Makita H."/>
            <person name="Sekine M."/>
            <person name="Obayashi M."/>
            <person name="Nishi T."/>
            <person name="Shibahara T."/>
            <person name="Tanaka T."/>
            <person name="Ishii S."/>
            <person name="Yamamoto J."/>
            <person name="Saito K."/>
            <person name="Kawai Y."/>
            <person name="Isono Y."/>
            <person name="Nakamura Y."/>
            <person name="Nagahari K."/>
            <person name="Murakami K."/>
            <person name="Yasuda T."/>
            <person name="Iwayanagi T."/>
            <person name="Wagatsuma M."/>
            <person name="Shiratori A."/>
            <person name="Sudo H."/>
            <person name="Hosoiri T."/>
            <person name="Kaku Y."/>
            <person name="Kodaira H."/>
            <person name="Kondo H."/>
            <person name="Sugawara M."/>
            <person name="Takahashi M."/>
            <person name="Kanda K."/>
            <person name="Yokoi T."/>
            <person name="Furuya T."/>
            <person name="Kikkawa E."/>
            <person name="Omura Y."/>
            <person name="Abe K."/>
            <person name="Kamihara K."/>
            <person name="Katsuta N."/>
            <person name="Sato K."/>
            <person name="Tanikawa M."/>
            <person name="Yamazaki M."/>
            <person name="Ninomiya K."/>
            <person name="Ishibashi T."/>
            <person name="Yamashita H."/>
            <person name="Murakawa K."/>
            <person name="Fujimori K."/>
            <person name="Tanai H."/>
            <person name="Kimata M."/>
            <person name="Watanabe M."/>
            <person name="Hiraoka S."/>
            <person name="Chiba Y."/>
            <person name="Ishida S."/>
            <person name="Ono Y."/>
            <person name="Takiguchi S."/>
            <person name="Watanabe S."/>
            <person name="Yosida M."/>
            <person name="Hotuta T."/>
            <person name="Kusano J."/>
            <person name="Kanehori K."/>
            <person name="Takahashi-Fujii A."/>
            <person name="Hara H."/>
            <person name="Tanase T.-O."/>
            <person name="Nomura Y."/>
            <person name="Togiya S."/>
            <person name="Komai F."/>
            <person name="Hara R."/>
            <person name="Takeuchi K."/>
            <person name="Arita M."/>
            <person name="Imose N."/>
            <person name="Musashino K."/>
            <person name="Yuuki H."/>
            <person name="Oshima A."/>
            <person name="Sasaki N."/>
            <person name="Aotsuka S."/>
            <person name="Yoshikawa Y."/>
            <person name="Matsunawa H."/>
            <person name="Ichihara T."/>
            <person name="Shiohata N."/>
            <person name="Sano S."/>
            <person name="Moriya S."/>
            <person name="Momiyama H."/>
            <person name="Satoh N."/>
            <person name="Takami S."/>
            <person name="Terashima Y."/>
            <person name="Suzuki O."/>
            <person name="Nakagawa S."/>
            <person name="Senoh A."/>
            <person name="Mizoguchi H."/>
            <person name="Goto Y."/>
            <person name="Shimizu F."/>
            <person name="Wakebe H."/>
            <person name="Hishigaki H."/>
            <person name="Watanabe T."/>
            <person name="Sugiyama A."/>
            <person name="Takemoto M."/>
            <person name="Kawakami B."/>
            <person name="Yamazaki M."/>
            <person name="Watanabe K."/>
            <person name="Kumagai A."/>
            <person name="Itakura S."/>
            <person name="Fukuzumi Y."/>
            <person name="Fujimori Y."/>
            <person name="Komiyama M."/>
            <person name="Tashiro H."/>
            <person name="Tanigami A."/>
            <person name="Fujiwara T."/>
            <person name="Ono T."/>
            <person name="Yamada K."/>
            <person name="Fujii Y."/>
            <person name="Ozaki K."/>
            <person name="Hirao M."/>
            <person name="Ohmori Y."/>
            <person name="Kawabata A."/>
            <person name="Hikiji T."/>
            <person name="Kobatake N."/>
            <person name="Inagaki H."/>
            <person name="Ikema Y."/>
            <person name="Okamoto S."/>
            <person name="Okitani R."/>
            <person name="Kawakami T."/>
            <person name="Noguchi S."/>
            <person name="Itoh T."/>
            <person name="Shigeta K."/>
            <person name="Senba T."/>
            <person name="Matsumura K."/>
            <person name="Nakajima Y."/>
            <person name="Mizuno T."/>
            <person name="Morinaga M."/>
            <person name="Sasaki M."/>
            <person name="Togashi T."/>
            <person name="Oyama M."/>
            <person name="Hata H."/>
            <person name="Watanabe M."/>
            <person name="Komatsu T."/>
            <person name="Mizushima-Sugano J."/>
            <person name="Satoh T."/>
            <person name="Shirai Y."/>
            <person name="Takahashi Y."/>
            <person name="Nakagawa K."/>
            <person name="Okumura K."/>
            <person name="Nagase T."/>
            <person name="Nomura N."/>
            <person name="Kikuchi H."/>
            <person name="Masuho Y."/>
            <person name="Yamashita R."/>
            <person name="Nakai K."/>
            <person name="Yada T."/>
            <person name="Nakamura Y."/>
            <person name="Ohara O."/>
            <person name="Isogai T."/>
            <person name="Sugano S."/>
        </authorList>
    </citation>
    <scope>NUCLEOTIDE SEQUENCE [LARGE SCALE MRNA] (ISOFORM 2)</scope>
</reference>
<reference key="3">
    <citation type="journal article" date="2005" name="Nature">
        <title>Generation and annotation of the DNA sequences of human chromosomes 2 and 4.</title>
        <authorList>
            <person name="Hillier L.W."/>
            <person name="Graves T.A."/>
            <person name="Fulton R.S."/>
            <person name="Fulton L.A."/>
            <person name="Pepin K.H."/>
            <person name="Minx P."/>
            <person name="Wagner-McPherson C."/>
            <person name="Layman D."/>
            <person name="Wylie K."/>
            <person name="Sekhon M."/>
            <person name="Becker M.C."/>
            <person name="Fewell G.A."/>
            <person name="Delehaunty K.D."/>
            <person name="Miner T.L."/>
            <person name="Nash W.E."/>
            <person name="Kremitzki C."/>
            <person name="Oddy L."/>
            <person name="Du H."/>
            <person name="Sun H."/>
            <person name="Bradshaw-Cordum H."/>
            <person name="Ali J."/>
            <person name="Carter J."/>
            <person name="Cordes M."/>
            <person name="Harris A."/>
            <person name="Isak A."/>
            <person name="van Brunt A."/>
            <person name="Nguyen C."/>
            <person name="Du F."/>
            <person name="Courtney L."/>
            <person name="Kalicki J."/>
            <person name="Ozersky P."/>
            <person name="Abbott S."/>
            <person name="Armstrong J."/>
            <person name="Belter E.A."/>
            <person name="Caruso L."/>
            <person name="Cedroni M."/>
            <person name="Cotton M."/>
            <person name="Davidson T."/>
            <person name="Desai A."/>
            <person name="Elliott G."/>
            <person name="Erb T."/>
            <person name="Fronick C."/>
            <person name="Gaige T."/>
            <person name="Haakenson W."/>
            <person name="Haglund K."/>
            <person name="Holmes A."/>
            <person name="Harkins R."/>
            <person name="Kim K."/>
            <person name="Kruchowski S.S."/>
            <person name="Strong C.M."/>
            <person name="Grewal N."/>
            <person name="Goyea E."/>
            <person name="Hou S."/>
            <person name="Levy A."/>
            <person name="Martinka S."/>
            <person name="Mead K."/>
            <person name="McLellan M.D."/>
            <person name="Meyer R."/>
            <person name="Randall-Maher J."/>
            <person name="Tomlinson C."/>
            <person name="Dauphin-Kohlberg S."/>
            <person name="Kozlowicz-Reilly A."/>
            <person name="Shah N."/>
            <person name="Swearengen-Shahid S."/>
            <person name="Snider J."/>
            <person name="Strong J.T."/>
            <person name="Thompson J."/>
            <person name="Yoakum M."/>
            <person name="Leonard S."/>
            <person name="Pearman C."/>
            <person name="Trani L."/>
            <person name="Radionenko M."/>
            <person name="Waligorski J.E."/>
            <person name="Wang C."/>
            <person name="Rock S.M."/>
            <person name="Tin-Wollam A.-M."/>
            <person name="Maupin R."/>
            <person name="Latreille P."/>
            <person name="Wendl M.C."/>
            <person name="Yang S.-P."/>
            <person name="Pohl C."/>
            <person name="Wallis J.W."/>
            <person name="Spieth J."/>
            <person name="Bieri T.A."/>
            <person name="Berkowicz N."/>
            <person name="Nelson J.O."/>
            <person name="Osborne J."/>
            <person name="Ding L."/>
            <person name="Meyer R."/>
            <person name="Sabo A."/>
            <person name="Shotland Y."/>
            <person name="Sinha P."/>
            <person name="Wohldmann P.E."/>
            <person name="Cook L.L."/>
            <person name="Hickenbotham M.T."/>
            <person name="Eldred J."/>
            <person name="Williams D."/>
            <person name="Jones T.A."/>
            <person name="She X."/>
            <person name="Ciccarelli F.D."/>
            <person name="Izaurralde E."/>
            <person name="Taylor J."/>
            <person name="Schmutz J."/>
            <person name="Myers R.M."/>
            <person name="Cox D.R."/>
            <person name="Huang X."/>
            <person name="McPherson J.D."/>
            <person name="Mardis E.R."/>
            <person name="Clifton S.W."/>
            <person name="Warren W.C."/>
            <person name="Chinwalla A.T."/>
            <person name="Eddy S.R."/>
            <person name="Marra M.A."/>
            <person name="Ovcharenko I."/>
            <person name="Furey T.S."/>
            <person name="Miller W."/>
            <person name="Eichler E.E."/>
            <person name="Bork P."/>
            <person name="Suyama M."/>
            <person name="Torrents D."/>
            <person name="Waterston R.H."/>
            <person name="Wilson R.K."/>
        </authorList>
    </citation>
    <scope>NUCLEOTIDE SEQUENCE [LARGE SCALE GENOMIC DNA]</scope>
</reference>
<reference key="4">
    <citation type="submission" date="2005-09" db="EMBL/GenBank/DDBJ databases">
        <authorList>
            <person name="Mural R.J."/>
            <person name="Istrail S."/>
            <person name="Sutton G.G."/>
            <person name="Florea L."/>
            <person name="Halpern A.L."/>
            <person name="Mobarry C.M."/>
            <person name="Lippert R."/>
            <person name="Walenz B."/>
            <person name="Shatkay H."/>
            <person name="Dew I."/>
            <person name="Miller J.R."/>
            <person name="Flanigan M.J."/>
            <person name="Edwards N.J."/>
            <person name="Bolanos R."/>
            <person name="Fasulo D."/>
            <person name="Halldorsson B.V."/>
            <person name="Hannenhalli S."/>
            <person name="Turner R."/>
            <person name="Yooseph S."/>
            <person name="Lu F."/>
            <person name="Nusskern D.R."/>
            <person name="Shue B.C."/>
            <person name="Zheng X.H."/>
            <person name="Zhong F."/>
            <person name="Delcher A.L."/>
            <person name="Huson D.H."/>
            <person name="Kravitz S.A."/>
            <person name="Mouchard L."/>
            <person name="Reinert K."/>
            <person name="Remington K.A."/>
            <person name="Clark A.G."/>
            <person name="Waterman M.S."/>
            <person name="Eichler E.E."/>
            <person name="Adams M.D."/>
            <person name="Hunkapiller M.W."/>
            <person name="Myers E.W."/>
            <person name="Venter J.C."/>
        </authorList>
    </citation>
    <scope>NUCLEOTIDE SEQUENCE [LARGE SCALE GENOMIC DNA]</scope>
</reference>
<reference key="5">
    <citation type="journal article" date="2004" name="Genome Res.">
        <title>The status, quality, and expansion of the NIH full-length cDNA project: the Mammalian Gene Collection (MGC).</title>
        <authorList>
            <consortium name="The MGC Project Team"/>
        </authorList>
    </citation>
    <scope>NUCLEOTIDE SEQUENCE [LARGE SCALE MRNA] (ISOFORM 1)</scope>
    <source>
        <tissue>Brain</tissue>
        <tissue>Ovary</tissue>
    </source>
</reference>
<reference key="6">
    <citation type="journal article" date="2004" name="Histochem. Cell Biol.">
        <title>Expression and subcellular localization of Spred proteins in mouse and human tissues.</title>
        <authorList>
            <person name="Engelhardt C.M."/>
            <person name="Bundschu K."/>
            <person name="Messerschmitt M."/>
            <person name="Renne T."/>
            <person name="Walter U."/>
            <person name="Reinhard M."/>
            <person name="Schuh K."/>
        </authorList>
    </citation>
    <scope>TISSUE SPECIFICITY</scope>
    <scope>SUBCELLULAR LOCATION</scope>
</reference>
<reference key="7">
    <citation type="journal article" date="2006" name="Biochem. Biophys. Res. Commun.">
        <title>Spred-2 steady-state levels are regulated by phosphorylation and Cbl-mediated ubiquitination.</title>
        <authorList>
            <person name="Lock P."/>
            <person name="I S.T.T."/>
            <person name="Straffon A.F."/>
            <person name="Schieb H."/>
            <person name="Hovens C.M."/>
            <person name="Stylli S.S."/>
        </authorList>
    </citation>
    <scope>UBIQUITINATION</scope>
    <scope>PHOSPHORYLATION AT TYR-228 AND TYR-231</scope>
    <scope>MUTAGENESIS OF TYR-228; TYR-231; TYR-240; TYR-251; TYR-264; TYR-266; TYR-268; TYR-311; TYR-351 AND TYR-394</scope>
</reference>
<reference key="8">
    <citation type="journal article" date="2013" name="J. Proteome Res.">
        <title>Toward a comprehensive characterization of a human cancer cell phosphoproteome.</title>
        <authorList>
            <person name="Zhou H."/>
            <person name="Di Palma S."/>
            <person name="Preisinger C."/>
            <person name="Peng M."/>
            <person name="Polat A.N."/>
            <person name="Heck A.J."/>
            <person name="Mohammed S."/>
        </authorList>
    </citation>
    <scope>PHOSPHORYLATION [LARGE SCALE ANALYSIS] AT SER-206</scope>
    <scope>IDENTIFICATION BY MASS SPECTROMETRY [LARGE SCALE ANALYSIS]</scope>
    <source>
        <tissue>Erythroleukemia</tissue>
    </source>
</reference>
<reference key="9">
    <citation type="journal article" date="2004" name="J. Biomol. NMR">
        <title>1H, 13C and 15N resonance assignment of the human Spred2 EVH1 domain.</title>
        <authorList>
            <person name="Zimmermann J."/>
            <person name="Jarchau T."/>
            <person name="Walter U."/>
            <person name="Oschkinat H."/>
            <person name="Ball L.J."/>
        </authorList>
    </citation>
    <scope>STRUCTURE BY NMR OF 1-124</scope>
</reference>
<reference key="10">
    <citation type="journal article" date="2021" name="Am. J. Hum. Genet.">
        <title>SPRED2 loss-of-function causes a recessive Noonan syndrome-like phenotype.</title>
        <authorList>
            <person name="Motta M."/>
            <person name="Fasano G."/>
            <person name="Gredy S."/>
            <person name="Brinkmann J."/>
            <person name="Bonnard A.A."/>
            <person name="Simsek-Kiper P.O."/>
            <person name="Gulec E.Y."/>
            <person name="Essaddam L."/>
            <person name="Utine G.E."/>
            <person name="Guarnetti Prandi I."/>
            <person name="Venditti M."/>
            <person name="Pantaleoni F."/>
            <person name="Radio F.C."/>
            <person name="Ciolfi A."/>
            <person name="Petrini S."/>
            <person name="Consoli F."/>
            <person name="Vignal C."/>
            <person name="Hepbasli D."/>
            <person name="Ullrich M."/>
            <person name="de Boer E."/>
            <person name="Vissers L.E.L.M."/>
            <person name="Gritli S."/>
            <person name="Rossi C."/>
            <person name="De Luca A."/>
            <person name="Ben Becher S."/>
            <person name="Gelb B.D."/>
            <person name="Dallapiccola B."/>
            <person name="Lauri A."/>
            <person name="Chillemi G."/>
            <person name="Schuh K."/>
            <person name="Cave H."/>
            <person name="Zenker M."/>
            <person name="Tartaglia M."/>
        </authorList>
    </citation>
    <scope>VARIANTS NS14 63-ARG--ALA-418 DEL AND PRO-100</scope>
    <scope>CHARACTERIZATION OF VARIANTS NS14 63-ARG--ALA-418 DEL AND PRO-100</scope>
    <scope>INVOLVEMENT IN NS14</scope>
    <scope>SUBCELLULAR LOCATION</scope>
    <scope>INTERACTION WITH NF1</scope>
    <scope>FUNCTION</scope>
</reference>
<keyword id="KW-0002">3D-structure</keyword>
<keyword id="KW-0025">Alternative splicing</keyword>
<keyword id="KW-1003">Cell membrane</keyword>
<keyword id="KW-0963">Cytoplasm</keyword>
<keyword id="KW-0968">Cytoplasmic vesicle</keyword>
<keyword id="KW-0225">Disease variant</keyword>
<keyword id="KW-0472">Membrane</keyword>
<keyword id="KW-0597">Phosphoprotein</keyword>
<keyword id="KW-1267">Proteomics identification</keyword>
<keyword id="KW-1185">Reference proteome</keyword>
<keyword id="KW-0832">Ubl conjugation</keyword>
<sequence length="418" mass="47558">MTEETHPDDDSYIVRVKAVVMTRDDSSGGWFPQEGGGISRVGVCKVMHPEGNGRSGFLIHGERQKDKLVVLECYVRKDLVYTKANPTFHHWKVDNRKFGLTFQSPADARAFDRGVRKAIEDLIEGSTTSSSTIHNEAELGDDDVFTTATDSSSNSSQKREQPTRTISSPTSCEHRRIYTLGHLHDSYPTDHYHLDQPMPRPYRQVSFPDDDEEIVRINPREKIWMTGYEDYRHAPVRGKYPDPSEDADSSYVRFAKGEVPKHDYNYPYVDSSDFGLGEDPKGRGGSVIKTQPSRGKSRRRKEDGERSRCVYCRDMFNHEENRRGHCQDAPDSVRTCIRRVSCMWCADSMLYHCMSDPEGDYTDPCSCDTSDEKFCLRWMALIALSFLAPCMCCYLPLRACYHCGVMCRCCGGKHKAAA</sequence>
<proteinExistence type="evidence at protein level"/>
<protein>
    <recommendedName>
        <fullName>Sprouty-related, EVH1 domain-containing protein 2</fullName>
        <shortName>Spred-2</shortName>
    </recommendedName>
</protein>
<gene>
    <name type="primary">SPRED2</name>
</gene>
<comment type="function">
    <text evidence="1 7 9">Negatively regulates Ras signaling pathways and downstream activation of MAP kinases (PubMed:15683364, PubMed:34626534). Recruits and translocates NF1 to the cell membrane, thereby enabling NF1-dependent hydrolysis of active GTP-bound Ras to inactive GDP-bound Ras (PubMed:34626534). Inhibits fibroblast growth factor (FGF)-induced retinal lens fiber differentiation, probably by inhibiting FGF-mediated phosphorylation of ERK1/2 (By similarity). Inhibits TGFB-induced epithelial-to-mesenchymal transition in lens epithelial cells (By similarity).</text>
</comment>
<comment type="subunit">
    <text evidence="1 7 9">Homodimer and heterodimer (PubMed:15683364). Able to interact with SPRED1 to form heterodimers (PubMed:15683364). Interacts with RAS (By similarity). May interact with ZDHHC13 (via ANK repeats) and ZDHHC17 (via ANK repeats) (By similarity). Interacts with TESK1 (By similarity). Interacts with NF1 (PubMed:34626534).</text>
</comment>
<comment type="interaction">
    <interactant intactId="EBI-7082156">
        <id>Q7Z698</id>
    </interactant>
    <interactant intactId="EBI-21535880">
        <id>Q92870-2</id>
        <label>APBB2</label>
    </interactant>
    <organismsDiffer>false</organismsDiffer>
    <experiments>3</experiments>
</comment>
<comment type="interaction">
    <interactant intactId="EBI-7082156">
        <id>Q7Z698</id>
    </interactant>
    <interactant intactId="EBI-745213">
        <id>P29972</id>
        <label>AQP1</label>
    </interactant>
    <organismsDiffer>false</organismsDiffer>
    <experiments>3</experiments>
</comment>
<comment type="interaction">
    <interactant intactId="EBI-7082156">
        <id>Q7Z698</id>
    </interactant>
    <interactant intactId="EBI-1049597">
        <id>P27797</id>
        <label>CALR</label>
    </interactant>
    <organismsDiffer>false</organismsDiffer>
    <experiments>3</experiments>
</comment>
<comment type="interaction">
    <interactant intactId="EBI-7082156">
        <id>Q7Z698</id>
    </interactant>
    <interactant intactId="EBI-25837549">
        <id>P28329-3</id>
        <label>CHAT</label>
    </interactant>
    <organismsDiffer>false</organismsDiffer>
    <experiments>3</experiments>
</comment>
<comment type="interaction">
    <interactant intactId="EBI-7082156">
        <id>Q7Z698</id>
    </interactant>
    <interactant intactId="EBI-351007">
        <id>P36957</id>
        <label>DLST</label>
    </interactant>
    <organismsDiffer>false</organismsDiffer>
    <experiments>3</experiments>
</comment>
<comment type="interaction">
    <interactant intactId="EBI-7082156">
        <id>Q7Z698</id>
    </interactant>
    <interactant intactId="EBI-10976677">
        <id>G5E9A7</id>
        <label>DMWD</label>
    </interactant>
    <organismsDiffer>false</organismsDiffer>
    <experiments>3</experiments>
</comment>
<comment type="interaction">
    <interactant intactId="EBI-7082156">
        <id>Q7Z698</id>
    </interactant>
    <interactant intactId="EBI-10968534">
        <id>P50570-2</id>
        <label>DNM2</label>
    </interactant>
    <organismsDiffer>false</organismsDiffer>
    <experiments>3</experiments>
</comment>
<comment type="interaction">
    <interactant intactId="EBI-7082156">
        <id>Q7Z698</id>
    </interactant>
    <interactant intactId="EBI-348399">
        <id>P22607</id>
        <label>FGFR3</label>
    </interactant>
    <organismsDiffer>false</organismsDiffer>
    <experiments>3</experiments>
</comment>
<comment type="interaction">
    <interactant intactId="EBI-7082156">
        <id>Q7Z698</id>
    </interactant>
    <interactant intactId="EBI-744302">
        <id>P14136</id>
        <label>GFAP</label>
    </interactant>
    <organismsDiffer>false</organismsDiffer>
    <experiments>3</experiments>
</comment>
<comment type="interaction">
    <interactant intactId="EBI-7082156">
        <id>Q7Z698</id>
    </interactant>
    <interactant intactId="EBI-1955541">
        <id>Q53GS7</id>
        <label>GLE1</label>
    </interactant>
    <organismsDiffer>false</organismsDiffer>
    <experiments>3</experiments>
</comment>
<comment type="interaction">
    <interactant intactId="EBI-7082156">
        <id>Q7Z698</id>
    </interactant>
    <interactant intactId="EBI-747754">
        <id>P28799</id>
        <label>GRN</label>
    </interactant>
    <organismsDiffer>false</organismsDiffer>
    <experiments>3</experiments>
</comment>
<comment type="interaction">
    <interactant intactId="EBI-7082156">
        <id>Q7Z698</id>
    </interactant>
    <interactant intactId="EBI-466029">
        <id>P42858</id>
        <label>HTT</label>
    </interactant>
    <organismsDiffer>false</organismsDiffer>
    <experiments>6</experiments>
</comment>
<comment type="interaction">
    <interactant intactId="EBI-7082156">
        <id>Q7Z698</id>
    </interactant>
    <interactant intactId="EBI-22452746">
        <id>Q9NZI2-2</id>
        <label>KCNIP1</label>
    </interactant>
    <organismsDiffer>false</organismsDiffer>
    <experiments>3</experiments>
</comment>
<comment type="interaction">
    <interactant intactId="EBI-7082156">
        <id>Q7Z698</id>
    </interactant>
    <interactant intactId="EBI-10975473">
        <id>O60333-2</id>
        <label>KIF1B</label>
    </interactant>
    <organismsDiffer>false</organismsDiffer>
    <experiments>3</experiments>
</comment>
<comment type="interaction">
    <interactant intactId="EBI-7082156">
        <id>Q7Z698</id>
    </interactant>
    <interactant intactId="EBI-10981970">
        <id>Q5T749</id>
        <label>KPRP</label>
    </interactant>
    <organismsDiffer>false</organismsDiffer>
    <experiments>3</experiments>
</comment>
<comment type="interaction">
    <interactant intactId="EBI-7082156">
        <id>Q7Z698</id>
    </interactant>
    <interactant intactId="EBI-10176379">
        <id>P59991</id>
        <label>KRTAP12-2</label>
    </interactant>
    <organismsDiffer>false</organismsDiffer>
    <experiments>3</experiments>
</comment>
<comment type="interaction">
    <interactant intactId="EBI-7082156">
        <id>Q7Z698</id>
    </interactant>
    <interactant intactId="EBI-14065470">
        <id>Q9BYR9</id>
        <label>KRTAP2-4</label>
    </interactant>
    <organismsDiffer>false</organismsDiffer>
    <experiments>3</experiments>
</comment>
<comment type="interaction">
    <interactant intactId="EBI-7082156">
        <id>Q7Z698</id>
    </interactant>
    <interactant intactId="EBI-12224199">
        <id>Q5T751</id>
        <label>LCE1C</label>
    </interactant>
    <organismsDiffer>false</organismsDiffer>
    <experiments>3</experiments>
</comment>
<comment type="interaction">
    <interactant intactId="EBI-7082156">
        <id>Q7Z698</id>
    </interactant>
    <interactant intactId="EBI-11478468">
        <id>O14633</id>
        <label>LCE2B</label>
    </interactant>
    <organismsDiffer>false</organismsDiffer>
    <experiments>3</experiments>
</comment>
<comment type="interaction">
    <interactant intactId="EBI-7082156">
        <id>Q7Z698</id>
    </interactant>
    <interactant intactId="EBI-11955689">
        <id>Q5TCM9</id>
        <label>LCE5A</label>
    </interactant>
    <organismsDiffer>false</organismsDiffer>
    <experiments>3</experiments>
</comment>
<comment type="interaction">
    <interactant intactId="EBI-7082156">
        <id>Q7Z698</id>
    </interactant>
    <interactant intactId="EBI-351935">
        <id>P02545</id>
        <label>LMNA</label>
    </interactant>
    <organismsDiffer>false</organismsDiffer>
    <experiments>3</experiments>
</comment>
<comment type="interaction">
    <interactant intactId="EBI-7082156">
        <id>Q7Z698</id>
    </interactant>
    <interactant intactId="EBI-724076">
        <id>Q99750</id>
        <label>MDFI</label>
    </interactant>
    <organismsDiffer>false</organismsDiffer>
    <experiments>3</experiments>
</comment>
<comment type="interaction">
    <interactant intactId="EBI-7082156">
        <id>Q7Z698</id>
    </interactant>
    <interactant intactId="EBI-7950783">
        <id>Q96JP2</id>
        <label>MYO15B</label>
    </interactant>
    <organismsDiffer>false</organismsDiffer>
    <experiments>3</experiments>
</comment>
<comment type="interaction">
    <interactant intactId="EBI-7082156">
        <id>Q7Z698</id>
    </interactant>
    <interactant intactId="EBI-746987">
        <id>P62166</id>
        <label>NCS1</label>
    </interactant>
    <organismsDiffer>false</organismsDiffer>
    <experiments>3</experiments>
</comment>
<comment type="interaction">
    <interactant intactId="EBI-7082156">
        <id>Q7Z698</id>
    </interactant>
    <interactant intactId="EBI-1246238">
        <id>P17568</id>
        <label>NDUFB7</label>
    </interactant>
    <organismsDiffer>false</organismsDiffer>
    <experiments>3</experiments>
</comment>
<comment type="interaction">
    <interactant intactId="EBI-7082156">
        <id>Q7Z698</id>
    </interactant>
    <interactant intactId="EBI-713665">
        <id>P19404</id>
        <label>NDUFV2</label>
    </interactant>
    <organismsDiffer>false</organismsDiffer>
    <experiments>3</experiments>
</comment>
<comment type="interaction">
    <interactant intactId="EBI-7082156">
        <id>Q7Z698</id>
    </interactant>
    <interactant intactId="EBI-1055945">
        <id>Q8TDX7</id>
        <label>NEK7</label>
    </interactant>
    <organismsDiffer>false</organismsDiffer>
    <experiments>3</experiments>
</comment>
<comment type="interaction">
    <interactant intactId="EBI-7082156">
        <id>Q7Z698</id>
    </interactant>
    <interactant intactId="EBI-1391623">
        <id>P29474</id>
        <label>NOS3</label>
    </interactant>
    <organismsDiffer>false</organismsDiffer>
    <experiments>3</experiments>
</comment>
<comment type="interaction">
    <interactant intactId="EBI-7082156">
        <id>Q7Z698</id>
    </interactant>
    <interactant intactId="EBI-50433196">
        <id>A0A6Q8PF08</id>
        <label>PMP22</label>
    </interactant>
    <organismsDiffer>false</organismsDiffer>
    <experiments>3</experiments>
</comment>
<comment type="interaction">
    <interactant intactId="EBI-7082156">
        <id>Q7Z698</id>
    </interactant>
    <interactant intactId="EBI-749195">
        <id>P60891</id>
        <label>PRPS1</label>
    </interactant>
    <organismsDiffer>false</organismsDiffer>
    <experiments>3</experiments>
</comment>
<comment type="interaction">
    <interactant intactId="EBI-7082156">
        <id>Q7Z698</id>
    </interactant>
    <interactant intactId="EBI-347462">
        <id>P47897</id>
        <label>QARS1</label>
    </interactant>
    <organismsDiffer>false</organismsDiffer>
    <experiments>3</experiments>
</comment>
<comment type="interaction">
    <interactant intactId="EBI-7082156">
        <id>Q7Z698</id>
    </interactant>
    <interactant intactId="EBI-473821">
        <id>Q5RL73</id>
        <label>RBM48</label>
    </interactant>
    <organismsDiffer>false</organismsDiffer>
    <experiments>3</experiments>
</comment>
<comment type="interaction">
    <interactant intactId="EBI-7082156">
        <id>Q7Z698</id>
    </interactant>
    <interactant intactId="EBI-396669">
        <id>Q9Y3C5</id>
        <label>RNF11</label>
    </interactant>
    <organismsDiffer>false</organismsDiffer>
    <experiments>3</experiments>
</comment>
<comment type="interaction">
    <interactant intactId="EBI-7082156">
        <id>Q7Z698</id>
    </interactant>
    <interactant intactId="EBI-1046616">
        <id>P51812</id>
        <label>RPS6KA3</label>
    </interactant>
    <organismsDiffer>false</organismsDiffer>
    <experiments>4</experiments>
</comment>
<comment type="interaction">
    <interactant intactId="EBI-7082156">
        <id>Q7Z698</id>
    </interactant>
    <interactant intactId="EBI-722467">
        <id>Q9UK32</id>
        <label>RPS6KA6</label>
    </interactant>
    <organismsDiffer>false</organismsDiffer>
    <experiments>3</experiments>
</comment>
<comment type="interaction">
    <interactant intactId="EBI-7082156">
        <id>Q7Z698</id>
    </interactant>
    <interactant intactId="EBI-742688">
        <id>Q9NZD8</id>
        <label>SPG21</label>
    </interactant>
    <organismsDiffer>false</organismsDiffer>
    <experiments>10</experiments>
</comment>
<comment type="interaction">
    <interactant intactId="EBI-7082156">
        <id>Q7Z698</id>
    </interactant>
    <interactant intactId="EBI-5235340">
        <id>Q7Z699</id>
        <label>SPRED1</label>
    </interactant>
    <organismsDiffer>false</organismsDiffer>
    <experiments>3</experiments>
</comment>
<comment type="interaction">
    <interactant intactId="EBI-7082156">
        <id>Q7Z698</id>
    </interactant>
    <interactant intactId="EBI-373403">
        <id>O95985</id>
        <label>TOP3B</label>
    </interactant>
    <organismsDiffer>false</organismsDiffer>
    <experiments>4</experiments>
</comment>
<comment type="interaction">
    <interactant intactId="EBI-7082156">
        <id>Q7Z698</id>
    </interactant>
    <interactant intactId="EBI-21353855">
        <id>Q99598</id>
        <label>TSNAX</label>
    </interactant>
    <organismsDiffer>false</organismsDiffer>
    <experiments>3</experiments>
</comment>
<comment type="interaction">
    <interactant intactId="EBI-7082156">
        <id>Q7Z698</id>
    </interactant>
    <interactant intactId="EBI-740943">
        <id>P62760</id>
        <label>VSNL1</label>
    </interactant>
    <organismsDiffer>false</organismsDiffer>
    <experiments>3</experiments>
</comment>
<comment type="interaction">
    <interactant intactId="EBI-7082156">
        <id>Q7Z698</id>
    </interactant>
    <interactant intactId="EBI-720609">
        <id>O76024</id>
        <label>WFS1</label>
    </interactant>
    <organismsDiffer>false</organismsDiffer>
    <experiments>3</experiments>
</comment>
<comment type="interaction">
    <interactant intactId="EBI-7082156">
        <id>Q7Z698</id>
    </interactant>
    <interactant intactId="EBI-524753">
        <id>Q8IUH5</id>
        <label>ZDHHC17</label>
    </interactant>
    <organismsDiffer>false</organismsDiffer>
    <experiments>4</experiments>
</comment>
<comment type="interaction">
    <interactant intactId="EBI-7082156">
        <id>Q7Z698</id>
    </interactant>
    <interactant intactId="EBI-10177272">
        <id>P15622-3</id>
        <label>ZNF250</label>
    </interactant>
    <organismsDiffer>false</organismsDiffer>
    <experiments>3</experiments>
</comment>
<comment type="interaction">
    <interactant intactId="EBI-7082156">
        <id>Q7Z698</id>
    </interactant>
    <interactant intactId="EBI-744257">
        <id>Q96IQ9</id>
        <label>ZNF414</label>
    </interactant>
    <organismsDiffer>false</organismsDiffer>
    <experiments>3</experiments>
</comment>
<comment type="interaction">
    <interactant intactId="EBI-7082156">
        <id>Q7Z698</id>
    </interactant>
    <interactant intactId="EBI-740727">
        <id>Q8TAU3</id>
        <label>ZNF417</label>
    </interactant>
    <organismsDiffer>false</organismsDiffer>
    <experiments>3</experiments>
</comment>
<comment type="interaction">
    <interactant intactId="EBI-7082156">
        <id>Q7Z698</id>
    </interactant>
    <interactant intactId="EBI-14069183">
        <id>Q86XF7</id>
        <label>ZNF575</label>
    </interactant>
    <organismsDiffer>false</organismsDiffer>
    <experiments>3</experiments>
</comment>
<comment type="interaction">
    <interactant intactId="EBI-7082156">
        <id>Q7Z698</id>
    </interactant>
    <interactant intactId="EBI-11962574">
        <id>Q96EG3</id>
        <label>ZNF837</label>
    </interactant>
    <organismsDiffer>false</organismsDiffer>
    <experiments>6</experiments>
</comment>
<comment type="subcellular location">
    <subcellularLocation>
        <location evidence="9">Cell membrane</location>
        <topology evidence="1">Peripheral membrane protein</topology>
        <orientation evidence="1">Cytoplasmic side</orientation>
    </subcellularLocation>
    <subcellularLocation>
        <location evidence="6">Cytoplasmic vesicle</location>
        <location evidence="6">Secretory vesicle membrane</location>
        <topology evidence="11">Peripheral membrane protein</topology>
        <orientation evidence="11">Cytoplasmic side</orientation>
    </subcellularLocation>
    <subcellularLocation>
        <location evidence="6">Cytoplasm</location>
    </subcellularLocation>
    <text evidence="6">Detected in the cytoplasm of the stratum spinosum cells, where it is associated with cytoplasmic vesicles that are supposed to be secretory granules.</text>
</comment>
<comment type="alternative products">
    <event type="alternative splicing"/>
    <isoform>
        <id>Q7Z698-1</id>
        <name>1</name>
        <sequence type="displayed"/>
    </isoform>
    <isoform>
        <id>Q7Z698-2</id>
        <name>2</name>
        <sequence type="described" ref="VSP_043755"/>
    </isoform>
</comment>
<comment type="tissue specificity">
    <text evidence="6">Expressed in liver, skin, small intestine, salivary gland and prostate.</text>
</comment>
<comment type="PTM">
    <text evidence="7 8">Phosphorylated on serine and threonine residues (PubMed:15683364). Phosphorylated on tyrosine. Phosphorylation of Tyr-228 and Tyr-231 are required for ubiquitination (PubMed:17094949).</text>
</comment>
<comment type="PTM">
    <text evidence="8">Ubiquitinated; leading to degradation by the proteasome.</text>
</comment>
<comment type="disease" evidence="9">
    <disease id="DI-06344">
        <name>Noonan syndrome 14</name>
        <acronym>NS14</acronym>
        <description>A form of Noonan syndrome, a disease characterized by short stature, facial dysmorphic features such as hypertelorism, a downward eyeslant and low-set posteriorly rotated ears, and a high incidence of congenital heart defects and hypertrophic cardiomyopathy. Other features can include a short neck with webbing or redundancy of skin, deafness, motor delay, variable intellectual deficits, multiple skeletal defects, cryptorchidism, and bleeding diathesis. NS14 inheritance is autosomal recessive.</description>
        <dbReference type="MIM" id="619745"/>
    </disease>
    <text>The disease is caused by variants affecting the gene represented in this entry.</text>
</comment>
<feature type="chain" id="PRO_0000076910" description="Sprouty-related, EVH1 domain-containing protein 2">
    <location>
        <begin position="1"/>
        <end position="418"/>
    </location>
</feature>
<feature type="domain" description="WH1" evidence="2">
    <location>
        <begin position="5"/>
        <end position="122"/>
    </location>
</feature>
<feature type="domain" description="KBD" evidence="4">
    <location>
        <begin position="201"/>
        <end position="257"/>
    </location>
</feature>
<feature type="domain" description="SPR" evidence="3">
    <location>
        <begin position="308"/>
        <end position="416"/>
    </location>
</feature>
<feature type="region of interest" description="Disordered" evidence="5">
    <location>
        <begin position="127"/>
        <end position="171"/>
    </location>
</feature>
<feature type="region of interest" description="Disordered" evidence="5">
    <location>
        <begin position="275"/>
        <end position="302"/>
    </location>
</feature>
<feature type="compositionally biased region" description="Polar residues" evidence="5">
    <location>
        <begin position="146"/>
        <end position="156"/>
    </location>
</feature>
<feature type="modified residue" description="Phosphoserine" evidence="13">
    <location>
        <position position="206"/>
    </location>
</feature>
<feature type="modified residue" description="Phosphotyrosine" evidence="12">
    <location>
        <position position="228"/>
    </location>
</feature>
<feature type="modified residue" description="Phosphotyrosine" evidence="12">
    <location>
        <position position="231"/>
    </location>
</feature>
<feature type="splice variant" id="VSP_043755" description="In isoform 2." evidence="10">
    <original>MTEETHPDD</original>
    <variation>MASPGS</variation>
    <location>
        <begin position="1"/>
        <end position="9"/>
    </location>
</feature>
<feature type="sequence variant" id="VAR_086929" description="In NS14; results in loss of MAPK down-regulation; increased protein degradation." evidence="9">
    <location>
        <begin position="63"/>
        <end position="418"/>
    </location>
</feature>
<feature type="sequence variant" id="VAR_086930" description="In NS14; results in loss of MAPK down-regulation; increased protein degradation; properly targeted to the cell membrane; loss of interaction with NF1; dbSNP:rs2104216988." evidence="9">
    <original>L</original>
    <variation>P</variation>
    <location>
        <position position="100"/>
    </location>
</feature>
<feature type="mutagenesis site" description="Reduces ubiquitination and CBL-induced phosphorylation; when associated with F-231." evidence="8">
    <original>Y</original>
    <variation>F</variation>
    <location>
        <position position="228"/>
    </location>
</feature>
<feature type="mutagenesis site" description="Reduces ubiquitination and CBL-induced phosphorylation; when associated with F-228." evidence="8">
    <original>Y</original>
    <variation>F</variation>
    <location>
        <position position="231"/>
    </location>
</feature>
<feature type="mutagenesis site" description="No effect on phosphorylation or ubiquitination." evidence="8">
    <original>Y</original>
    <variation>F</variation>
    <location>
        <position position="240"/>
    </location>
</feature>
<feature type="mutagenesis site" description="No effect on phosphorylation or ubiquitination." evidence="8">
    <original>Y</original>
    <variation>F</variation>
    <location>
        <position position="251"/>
    </location>
</feature>
<feature type="mutagenesis site" description="No effect on phosphorylation or ubiquitination; when associated with F-266." evidence="8">
    <original>Y</original>
    <variation>F</variation>
    <location>
        <position position="264"/>
    </location>
</feature>
<feature type="mutagenesis site" description="No effect on phosphorylation or ubiquitination; when associated with F-264." evidence="8">
    <original>Y</original>
    <variation>F</variation>
    <location>
        <position position="266"/>
    </location>
</feature>
<feature type="mutagenesis site" description="No effect on phosphorylation or ubiquitination." evidence="8">
    <original>Y</original>
    <variation>F</variation>
    <location>
        <position position="268"/>
    </location>
</feature>
<feature type="mutagenesis site" description="No effect on phosphorylation or ubiquitination." evidence="8">
    <original>Y</original>
    <variation>F</variation>
    <location>
        <position position="311"/>
    </location>
</feature>
<feature type="mutagenesis site" description="No effect on phosphorylation or ubiquitination." evidence="8">
    <original>Y</original>
    <variation>F</variation>
    <location>
        <position position="351"/>
    </location>
</feature>
<feature type="mutagenesis site" description="No effect on phosphorylation or ubiquitination." evidence="8">
    <original>Y</original>
    <variation>F</variation>
    <location>
        <position position="394"/>
    </location>
</feature>
<feature type="sequence conflict" description="In Ref. 2; BAH12943." evidence="11" ref="2">
    <original>Q</original>
    <variation>R</variation>
    <location>
        <position position="33"/>
    </location>
</feature>
<feature type="sequence conflict" description="In Ref. 1; AAP59415." evidence="11" ref="1">
    <original>Y</original>
    <variation>C</variation>
    <location>
        <position position="202"/>
    </location>
</feature>
<feature type="strand" evidence="14">
    <location>
        <begin position="5"/>
        <end position="8"/>
    </location>
</feature>
<feature type="strand" evidence="14">
    <location>
        <begin position="11"/>
        <end position="23"/>
    </location>
</feature>
<feature type="strand" evidence="14">
    <location>
        <begin position="27"/>
        <end position="32"/>
    </location>
</feature>
<feature type="strand" evidence="14">
    <location>
        <begin position="39"/>
        <end position="44"/>
    </location>
</feature>
<feature type="strand" evidence="14">
    <location>
        <begin position="57"/>
        <end position="67"/>
    </location>
</feature>
<feature type="strand" evidence="14">
    <location>
        <begin position="69"/>
        <end position="77"/>
    </location>
</feature>
<feature type="strand" evidence="14">
    <location>
        <begin position="81"/>
        <end position="85"/>
    </location>
</feature>
<feature type="strand" evidence="14">
    <location>
        <begin position="88"/>
        <end position="92"/>
    </location>
</feature>
<feature type="strand" evidence="14">
    <location>
        <begin position="94"/>
        <end position="104"/>
    </location>
</feature>
<feature type="helix" evidence="14">
    <location>
        <begin position="105"/>
        <end position="123"/>
    </location>
</feature>
<accession>Q7Z698</accession>
<accession>A1L3V4</accession>
<accession>B7Z5K7</accession>
<accession>D6W5F7</accession>
<accession>E9PEP0</accession>
<accession>Q2NKX6</accession>
<name>SPRE2_HUMAN</name>
<dbReference type="EMBL" id="AY299090">
    <property type="protein sequence ID" value="AAP59415.1"/>
    <property type="molecule type" value="mRNA"/>
</dbReference>
<dbReference type="EMBL" id="AK299079">
    <property type="protein sequence ID" value="BAH12943.1"/>
    <property type="molecule type" value="mRNA"/>
</dbReference>
<dbReference type="EMBL" id="AC012370">
    <property type="status" value="NOT_ANNOTATED_CDS"/>
    <property type="molecule type" value="Genomic_DNA"/>
</dbReference>
<dbReference type="EMBL" id="AC097503">
    <property type="status" value="NOT_ANNOTATED_CDS"/>
    <property type="molecule type" value="Genomic_DNA"/>
</dbReference>
<dbReference type="EMBL" id="CH471053">
    <property type="protein sequence ID" value="EAW99905.1"/>
    <property type="molecule type" value="Genomic_DNA"/>
</dbReference>
<dbReference type="EMBL" id="CH471053">
    <property type="protein sequence ID" value="EAW99906.1"/>
    <property type="molecule type" value="Genomic_DNA"/>
</dbReference>
<dbReference type="EMBL" id="BC111495">
    <property type="protein sequence ID" value="AAI11496.1"/>
    <property type="molecule type" value="mRNA"/>
</dbReference>
<dbReference type="EMBL" id="BC130292">
    <property type="protein sequence ID" value="AAI30293.1"/>
    <property type="molecule type" value="mRNA"/>
</dbReference>
<dbReference type="EMBL" id="BC136334">
    <property type="protein sequence ID" value="AAI36335.1"/>
    <property type="molecule type" value="mRNA"/>
</dbReference>
<dbReference type="CCDS" id="CCDS33211.1">
    <molecule id="Q7Z698-1"/>
</dbReference>
<dbReference type="CCDS" id="CCDS46308.1">
    <molecule id="Q7Z698-2"/>
</dbReference>
<dbReference type="RefSeq" id="NP_001121682.1">
    <molecule id="Q7Z698-2"/>
    <property type="nucleotide sequence ID" value="NM_001128210.2"/>
</dbReference>
<dbReference type="RefSeq" id="NP_861449.2">
    <molecule id="Q7Z698-1"/>
    <property type="nucleotide sequence ID" value="NM_181784.3"/>
</dbReference>
<dbReference type="PDB" id="2JP2">
    <property type="method" value="NMR"/>
    <property type="chains" value="A=1-124"/>
</dbReference>
<dbReference type="PDB" id="8EQ5">
    <property type="method" value="X-ray"/>
    <property type="resolution" value="1.80 A"/>
    <property type="chains" value="B=131-160"/>
</dbReference>
<dbReference type="PDBsum" id="2JP2"/>
<dbReference type="PDBsum" id="8EQ5"/>
<dbReference type="BMRB" id="Q7Z698"/>
<dbReference type="SMR" id="Q7Z698"/>
<dbReference type="BioGRID" id="128344">
    <property type="interactions" value="64"/>
</dbReference>
<dbReference type="FunCoup" id="Q7Z698">
    <property type="interactions" value="1290"/>
</dbReference>
<dbReference type="IntAct" id="Q7Z698">
    <property type="interactions" value="68"/>
</dbReference>
<dbReference type="MINT" id="Q7Z698"/>
<dbReference type="STRING" id="9606.ENSP00000348753"/>
<dbReference type="iPTMnet" id="Q7Z698"/>
<dbReference type="PhosphoSitePlus" id="Q7Z698"/>
<dbReference type="SwissPalm" id="Q7Z698"/>
<dbReference type="BioMuta" id="SPRED2"/>
<dbReference type="DMDM" id="110825745"/>
<dbReference type="jPOST" id="Q7Z698"/>
<dbReference type="MassIVE" id="Q7Z698"/>
<dbReference type="PaxDb" id="9606-ENSP00000348753"/>
<dbReference type="PeptideAtlas" id="Q7Z698"/>
<dbReference type="ProteomicsDB" id="69384">
    <molecule id="Q7Z698-1"/>
</dbReference>
<dbReference type="ProteomicsDB" id="69385">
    <molecule id="Q7Z698-2"/>
</dbReference>
<dbReference type="Pumba" id="Q7Z698"/>
<dbReference type="Antibodypedia" id="30873">
    <property type="antibodies" value="142 antibodies from 29 providers"/>
</dbReference>
<dbReference type="DNASU" id="200734"/>
<dbReference type="Ensembl" id="ENST00000356388.9">
    <molecule id="Q7Z698-1"/>
    <property type="protein sequence ID" value="ENSP00000348753.4"/>
    <property type="gene ID" value="ENSG00000198369.10"/>
</dbReference>
<dbReference type="Ensembl" id="ENST00000443619.6">
    <molecule id="Q7Z698-2"/>
    <property type="protein sequence ID" value="ENSP00000393697.2"/>
    <property type="gene ID" value="ENSG00000198369.10"/>
</dbReference>
<dbReference type="GeneID" id="200734"/>
<dbReference type="KEGG" id="hsa:200734"/>
<dbReference type="MANE-Select" id="ENST00000356388.9">
    <property type="protein sequence ID" value="ENSP00000348753.4"/>
    <property type="RefSeq nucleotide sequence ID" value="NM_181784.3"/>
    <property type="RefSeq protein sequence ID" value="NP_861449.2"/>
</dbReference>
<dbReference type="UCSC" id="uc002sdr.5">
    <molecule id="Q7Z698-1"/>
    <property type="organism name" value="human"/>
</dbReference>
<dbReference type="AGR" id="HGNC:17722"/>
<dbReference type="CTD" id="200734"/>
<dbReference type="DisGeNET" id="200734"/>
<dbReference type="GeneCards" id="SPRED2"/>
<dbReference type="HGNC" id="HGNC:17722">
    <property type="gene designation" value="SPRED2"/>
</dbReference>
<dbReference type="HPA" id="ENSG00000198369">
    <property type="expression patterns" value="Low tissue specificity"/>
</dbReference>
<dbReference type="MalaCards" id="SPRED2"/>
<dbReference type="MIM" id="609292">
    <property type="type" value="gene"/>
</dbReference>
<dbReference type="MIM" id="619745">
    <property type="type" value="phenotype"/>
</dbReference>
<dbReference type="neXtProt" id="NX_Q7Z698"/>
<dbReference type="OpenTargets" id="ENSG00000198369"/>
<dbReference type="Orphanet" id="648">
    <property type="disease" value="Noonan syndrome"/>
</dbReference>
<dbReference type="PharmGKB" id="PA134956365"/>
<dbReference type="VEuPathDB" id="HostDB:ENSG00000198369"/>
<dbReference type="eggNOG" id="KOG4590">
    <property type="taxonomic scope" value="Eukaryota"/>
</dbReference>
<dbReference type="GeneTree" id="ENSGT00940000156841"/>
<dbReference type="HOGENOM" id="CLU_038867_1_1_1"/>
<dbReference type="InParanoid" id="Q7Z698"/>
<dbReference type="OMA" id="FEHHRIC"/>
<dbReference type="OrthoDB" id="5786858at2759"/>
<dbReference type="PAN-GO" id="Q7Z698">
    <property type="GO annotations" value="2 GO annotations based on evolutionary models"/>
</dbReference>
<dbReference type="PhylomeDB" id="Q7Z698"/>
<dbReference type="TreeFam" id="TF321411"/>
<dbReference type="PathwayCommons" id="Q7Z698"/>
<dbReference type="Reactome" id="R-HSA-5658442">
    <property type="pathway name" value="Regulation of RAS by GAPs"/>
</dbReference>
<dbReference type="Reactome" id="R-HSA-5658623">
    <property type="pathway name" value="FGFRL1 modulation of FGFR1 signaling"/>
</dbReference>
<dbReference type="Reactome" id="R-HSA-6802953">
    <property type="pathway name" value="RAS signaling downstream of NF1 loss-of-function variants"/>
</dbReference>
<dbReference type="SignaLink" id="Q7Z698"/>
<dbReference type="BioGRID-ORCS" id="200734">
    <property type="hits" value="34 hits in 1170 CRISPR screens"/>
</dbReference>
<dbReference type="ChiTaRS" id="SPRED2">
    <property type="organism name" value="human"/>
</dbReference>
<dbReference type="EvolutionaryTrace" id="Q7Z698"/>
<dbReference type="GeneWiki" id="SPRED2"/>
<dbReference type="GenomeRNAi" id="200734"/>
<dbReference type="Pharos" id="Q7Z698">
    <property type="development level" value="Tbio"/>
</dbReference>
<dbReference type="PRO" id="PR:Q7Z698"/>
<dbReference type="Proteomes" id="UP000005640">
    <property type="component" value="Chromosome 2"/>
</dbReference>
<dbReference type="RNAct" id="Q7Z698">
    <property type="molecule type" value="protein"/>
</dbReference>
<dbReference type="Bgee" id="ENSG00000198369">
    <property type="expression patterns" value="Expressed in sural nerve and 181 other cell types or tissues"/>
</dbReference>
<dbReference type="ExpressionAtlas" id="Q7Z698">
    <property type="expression patterns" value="baseline and differential"/>
</dbReference>
<dbReference type="GO" id="GO:0005829">
    <property type="term" value="C:cytosol"/>
    <property type="evidence" value="ECO:0000304"/>
    <property type="project" value="Reactome"/>
</dbReference>
<dbReference type="GO" id="GO:0005886">
    <property type="term" value="C:plasma membrane"/>
    <property type="evidence" value="ECO:0000318"/>
    <property type="project" value="GO_Central"/>
</dbReference>
<dbReference type="GO" id="GO:0030658">
    <property type="term" value="C:transport vesicle membrane"/>
    <property type="evidence" value="ECO:0007669"/>
    <property type="project" value="UniProtKB-SubCell"/>
</dbReference>
<dbReference type="GO" id="GO:0019901">
    <property type="term" value="F:protein kinase binding"/>
    <property type="evidence" value="ECO:0000353"/>
    <property type="project" value="BHF-UCL"/>
</dbReference>
<dbReference type="GO" id="GO:0030291">
    <property type="term" value="F:protein serine/threonine kinase inhibitor activity"/>
    <property type="evidence" value="ECO:0000250"/>
    <property type="project" value="BHF-UCL"/>
</dbReference>
<dbReference type="GO" id="GO:0005173">
    <property type="term" value="F:stem cell factor receptor binding"/>
    <property type="evidence" value="ECO:0000250"/>
    <property type="project" value="UniProtKB"/>
</dbReference>
<dbReference type="GO" id="GO:0010719">
    <property type="term" value="P:negative regulation of epithelial to mesenchymal transition"/>
    <property type="evidence" value="ECO:0000250"/>
    <property type="project" value="UniProtKB"/>
</dbReference>
<dbReference type="GO" id="GO:0070373">
    <property type="term" value="P:negative regulation of ERK1 and ERK2 cascade"/>
    <property type="evidence" value="ECO:0000250"/>
    <property type="project" value="UniProtKB"/>
</dbReference>
<dbReference type="GO" id="GO:1902532">
    <property type="term" value="P:negative regulation of intracellular signal transduction"/>
    <property type="evidence" value="ECO:0000315"/>
    <property type="project" value="BHF-UCL"/>
</dbReference>
<dbReference type="GO" id="GO:1902747">
    <property type="term" value="P:negative regulation of lens fiber cell differentiation"/>
    <property type="evidence" value="ECO:0000250"/>
    <property type="project" value="UniProtKB"/>
</dbReference>
<dbReference type="GO" id="GO:0043409">
    <property type="term" value="P:negative regulation of MAPK cascade"/>
    <property type="evidence" value="ECO:0000250"/>
    <property type="project" value="UniProtKB"/>
</dbReference>
<dbReference type="GO" id="GO:0030512">
    <property type="term" value="P:negative regulation of transforming growth factor beta receptor signaling pathway"/>
    <property type="evidence" value="ECO:0000250"/>
    <property type="project" value="UniProtKB"/>
</dbReference>
<dbReference type="GO" id="GO:0043517">
    <property type="term" value="P:positive regulation of DNA damage response, signal transduction by p53 class mediator"/>
    <property type="evidence" value="ECO:0000250"/>
    <property type="project" value="BHF-UCL"/>
</dbReference>
<dbReference type="CDD" id="cd10574">
    <property type="entry name" value="EVH1_SPRED-like"/>
    <property type="match status" value="1"/>
</dbReference>
<dbReference type="FunFam" id="2.30.29.30:FF:000052">
    <property type="entry name" value="Sprouty-related, EVH1 domain containing 2"/>
    <property type="match status" value="1"/>
</dbReference>
<dbReference type="Gene3D" id="2.30.29.30">
    <property type="entry name" value="Pleckstrin-homology domain (PH domain)/Phosphotyrosine-binding domain (PTB)"/>
    <property type="match status" value="1"/>
</dbReference>
<dbReference type="InterPro" id="IPR023337">
    <property type="entry name" value="KBD"/>
</dbReference>
<dbReference type="InterPro" id="IPR011993">
    <property type="entry name" value="PH-like_dom_sf"/>
</dbReference>
<dbReference type="InterPro" id="IPR041937">
    <property type="entry name" value="SPRE_EVH1"/>
</dbReference>
<dbReference type="InterPro" id="IPR007875">
    <property type="entry name" value="Sprouty"/>
</dbReference>
<dbReference type="InterPro" id="IPR000697">
    <property type="entry name" value="WH1/EVH1_dom"/>
</dbReference>
<dbReference type="PANTHER" id="PTHR11202:SF11">
    <property type="entry name" value="SPROUTY-RELATED, EVH1 DOMAIN-CONTAINING PROTEIN 2"/>
    <property type="match status" value="1"/>
</dbReference>
<dbReference type="PANTHER" id="PTHR11202">
    <property type="entry name" value="SPROUTY-RELATED, EVH1 DOMAIN-CONTAINING PROTEIN FAMILY MEMBER"/>
    <property type="match status" value="1"/>
</dbReference>
<dbReference type="Pfam" id="PF05210">
    <property type="entry name" value="Sprouty"/>
    <property type="match status" value="1"/>
</dbReference>
<dbReference type="Pfam" id="PF00568">
    <property type="entry name" value="WH1"/>
    <property type="match status" value="1"/>
</dbReference>
<dbReference type="SMART" id="SM00461">
    <property type="entry name" value="WH1"/>
    <property type="match status" value="1"/>
</dbReference>
<dbReference type="SUPFAM" id="SSF50729">
    <property type="entry name" value="PH domain-like"/>
    <property type="match status" value="1"/>
</dbReference>
<dbReference type="PROSITE" id="PS51488">
    <property type="entry name" value="KBD"/>
    <property type="match status" value="1"/>
</dbReference>
<dbReference type="PROSITE" id="PS51227">
    <property type="entry name" value="SPR"/>
    <property type="match status" value="1"/>
</dbReference>
<dbReference type="PROSITE" id="PS50229">
    <property type="entry name" value="WH1"/>
    <property type="match status" value="1"/>
</dbReference>
<organism>
    <name type="scientific">Homo sapiens</name>
    <name type="common">Human</name>
    <dbReference type="NCBI Taxonomy" id="9606"/>
    <lineage>
        <taxon>Eukaryota</taxon>
        <taxon>Metazoa</taxon>
        <taxon>Chordata</taxon>
        <taxon>Craniata</taxon>
        <taxon>Vertebrata</taxon>
        <taxon>Euteleostomi</taxon>
        <taxon>Mammalia</taxon>
        <taxon>Eutheria</taxon>
        <taxon>Euarchontoglires</taxon>
        <taxon>Primates</taxon>
        <taxon>Haplorrhini</taxon>
        <taxon>Catarrhini</taxon>
        <taxon>Hominidae</taxon>
        <taxon>Homo</taxon>
    </lineage>
</organism>